<reference key="1">
    <citation type="journal article" date="2006" name="Lancet">
        <title>Complete genome sequence of USA300, an epidemic clone of community-acquired meticillin-resistant Staphylococcus aureus.</title>
        <authorList>
            <person name="Diep B.A."/>
            <person name="Gill S.R."/>
            <person name="Chang R.F."/>
            <person name="Phan T.H."/>
            <person name="Chen J.H."/>
            <person name="Davidson M.G."/>
            <person name="Lin F."/>
            <person name="Lin J."/>
            <person name="Carleton H.A."/>
            <person name="Mongodin E.F."/>
            <person name="Sensabaugh G.F."/>
            <person name="Perdreau-Remington F."/>
        </authorList>
    </citation>
    <scope>NUCLEOTIDE SEQUENCE [LARGE SCALE GENOMIC DNA]</scope>
    <source>
        <strain>USA300</strain>
    </source>
</reference>
<feature type="chain" id="PRO_0000243622" description="Glutamate-1-semialdehyde 2,1-aminomutase 2">
    <location>
        <begin position="1"/>
        <end position="429"/>
    </location>
</feature>
<feature type="modified residue" description="N6-(pyridoxal phosphate)lysine" evidence="1">
    <location>
        <position position="268"/>
    </location>
</feature>
<name>GSA2_STAA3</name>
<evidence type="ECO:0000255" key="1">
    <source>
        <dbReference type="HAMAP-Rule" id="MF_00375"/>
    </source>
</evidence>
<protein>
    <recommendedName>
        <fullName evidence="1">Glutamate-1-semialdehyde 2,1-aminomutase 2</fullName>
        <shortName evidence="1">GSA 2</shortName>
        <ecNumber evidence="1">5.4.3.8</ecNumber>
    </recommendedName>
    <alternativeName>
        <fullName evidence="1">Glutamate-1-semialdehyde aminotransferase 2</fullName>
        <shortName evidence="1">GSA-AT 2</shortName>
    </alternativeName>
</protein>
<sequence length="429" mass="46756">MNFSESERLQQLSNEYILGGVNSPSRSYKAVGGGAPVVMKEGHGAYLYDVDGNKFIDYLQAYGPIITGHAHPHITKAIQEQAAKGVLFGTPTELEIEFSKKLRDAIPSLEKIRFVNSGTEAVMTTIRVARAYTKRNKIIKFAGSYHGHSDLVLVAAGSGPSQLGSPDSAGVPESVAREVITVPFNDINAYKEAIEFWGDEIAAVLVEPIVGNFGMVMPQPGFLEEVNEISHNNGTLVIYDEVITAFRFHYGAAQDLLGVIPDLTAFGKIVGGGLPIGGYGGRQDIMEQVAPLGPAYQAGTMAGNPLSMKAGIALLEVLEQDGVYEKLDSLGQQLEEGLLKLIEKHNITATINRIYGSLTLYFTDEKVTHYDQVEHSDGEAFGKFFKLMLNQGINLAPSKFEAWFLTTEHTEEDIKQTLKAADYAFSQMK</sequence>
<proteinExistence type="inferred from homology"/>
<gene>
    <name evidence="1" type="primary">hemL2</name>
    <name type="synonym">gsaB</name>
    <name type="ordered locus">SAUSA300_1845</name>
</gene>
<keyword id="KW-0963">Cytoplasm</keyword>
<keyword id="KW-0413">Isomerase</keyword>
<keyword id="KW-0627">Porphyrin biosynthesis</keyword>
<keyword id="KW-0663">Pyridoxal phosphate</keyword>
<organism>
    <name type="scientific">Staphylococcus aureus (strain USA300)</name>
    <dbReference type="NCBI Taxonomy" id="367830"/>
    <lineage>
        <taxon>Bacteria</taxon>
        <taxon>Bacillati</taxon>
        <taxon>Bacillota</taxon>
        <taxon>Bacilli</taxon>
        <taxon>Bacillales</taxon>
        <taxon>Staphylococcaceae</taxon>
        <taxon>Staphylococcus</taxon>
    </lineage>
</organism>
<accession>Q2FFN1</accession>
<comment type="catalytic activity">
    <reaction evidence="1">
        <text>(S)-4-amino-5-oxopentanoate = 5-aminolevulinate</text>
        <dbReference type="Rhea" id="RHEA:14265"/>
        <dbReference type="ChEBI" id="CHEBI:57501"/>
        <dbReference type="ChEBI" id="CHEBI:356416"/>
        <dbReference type="EC" id="5.4.3.8"/>
    </reaction>
</comment>
<comment type="cofactor">
    <cofactor evidence="1">
        <name>pyridoxal 5'-phosphate</name>
        <dbReference type="ChEBI" id="CHEBI:597326"/>
    </cofactor>
</comment>
<comment type="pathway">
    <text evidence="1">Porphyrin-containing compound metabolism; protoporphyrin-IX biosynthesis; 5-aminolevulinate from L-glutamyl-tRNA(Glu): step 2/2.</text>
</comment>
<comment type="subunit">
    <text evidence="1">Homodimer.</text>
</comment>
<comment type="subcellular location">
    <subcellularLocation>
        <location evidence="1">Cytoplasm</location>
    </subcellularLocation>
</comment>
<comment type="similarity">
    <text evidence="1">Belongs to the class-III pyridoxal-phosphate-dependent aminotransferase family. HemL subfamily.</text>
</comment>
<dbReference type="EC" id="5.4.3.8" evidence="1"/>
<dbReference type="EMBL" id="CP000255">
    <property type="protein sequence ID" value="ABD22077.1"/>
    <property type="molecule type" value="Genomic_DNA"/>
</dbReference>
<dbReference type="RefSeq" id="WP_001011598.1">
    <property type="nucleotide sequence ID" value="NZ_CP027476.1"/>
</dbReference>
<dbReference type="SMR" id="Q2FFN1"/>
<dbReference type="KEGG" id="saa:SAUSA300_1845"/>
<dbReference type="HOGENOM" id="CLU_016922_1_5_9"/>
<dbReference type="OMA" id="NFGMVEP"/>
<dbReference type="UniPathway" id="UPA00251">
    <property type="reaction ID" value="UER00317"/>
</dbReference>
<dbReference type="Proteomes" id="UP000001939">
    <property type="component" value="Chromosome"/>
</dbReference>
<dbReference type="GO" id="GO:0005737">
    <property type="term" value="C:cytoplasm"/>
    <property type="evidence" value="ECO:0007669"/>
    <property type="project" value="UniProtKB-SubCell"/>
</dbReference>
<dbReference type="GO" id="GO:0042286">
    <property type="term" value="F:glutamate-1-semialdehyde 2,1-aminomutase activity"/>
    <property type="evidence" value="ECO:0007669"/>
    <property type="project" value="UniProtKB-UniRule"/>
</dbReference>
<dbReference type="GO" id="GO:0030170">
    <property type="term" value="F:pyridoxal phosphate binding"/>
    <property type="evidence" value="ECO:0007669"/>
    <property type="project" value="InterPro"/>
</dbReference>
<dbReference type="GO" id="GO:0008483">
    <property type="term" value="F:transaminase activity"/>
    <property type="evidence" value="ECO:0007669"/>
    <property type="project" value="InterPro"/>
</dbReference>
<dbReference type="GO" id="GO:0006782">
    <property type="term" value="P:protoporphyrinogen IX biosynthetic process"/>
    <property type="evidence" value="ECO:0007669"/>
    <property type="project" value="UniProtKB-UniRule"/>
</dbReference>
<dbReference type="CDD" id="cd00610">
    <property type="entry name" value="OAT_like"/>
    <property type="match status" value="1"/>
</dbReference>
<dbReference type="FunFam" id="3.40.640.10:FF:000021">
    <property type="entry name" value="Glutamate-1-semialdehyde 2,1-aminomutase"/>
    <property type="match status" value="1"/>
</dbReference>
<dbReference type="Gene3D" id="3.90.1150.10">
    <property type="entry name" value="Aspartate Aminotransferase, domain 1"/>
    <property type="match status" value="1"/>
</dbReference>
<dbReference type="Gene3D" id="3.40.640.10">
    <property type="entry name" value="Type I PLP-dependent aspartate aminotransferase-like (Major domain)"/>
    <property type="match status" value="1"/>
</dbReference>
<dbReference type="HAMAP" id="MF_00375">
    <property type="entry name" value="HemL_aminotrans_3"/>
    <property type="match status" value="1"/>
</dbReference>
<dbReference type="InterPro" id="IPR004639">
    <property type="entry name" value="4pyrrol_synth_GluAld_NH2Trfase"/>
</dbReference>
<dbReference type="InterPro" id="IPR005814">
    <property type="entry name" value="Aminotrans_3"/>
</dbReference>
<dbReference type="InterPro" id="IPR049704">
    <property type="entry name" value="Aminotrans_3_PPA_site"/>
</dbReference>
<dbReference type="InterPro" id="IPR015424">
    <property type="entry name" value="PyrdxlP-dep_Trfase"/>
</dbReference>
<dbReference type="InterPro" id="IPR015421">
    <property type="entry name" value="PyrdxlP-dep_Trfase_major"/>
</dbReference>
<dbReference type="InterPro" id="IPR015422">
    <property type="entry name" value="PyrdxlP-dep_Trfase_small"/>
</dbReference>
<dbReference type="NCBIfam" id="TIGR00713">
    <property type="entry name" value="hemL"/>
    <property type="match status" value="1"/>
</dbReference>
<dbReference type="NCBIfam" id="NF000818">
    <property type="entry name" value="PRK00062.1"/>
    <property type="match status" value="1"/>
</dbReference>
<dbReference type="NCBIfam" id="NF009055">
    <property type="entry name" value="PRK12389.1"/>
    <property type="match status" value="1"/>
</dbReference>
<dbReference type="PANTHER" id="PTHR43713">
    <property type="entry name" value="GLUTAMATE-1-SEMIALDEHYDE 2,1-AMINOMUTASE"/>
    <property type="match status" value="1"/>
</dbReference>
<dbReference type="PANTHER" id="PTHR43713:SF1">
    <property type="entry name" value="GLUTAMATE-1-SEMIALDEHYDE 2,1-AMINOMUTASE 2"/>
    <property type="match status" value="1"/>
</dbReference>
<dbReference type="Pfam" id="PF00202">
    <property type="entry name" value="Aminotran_3"/>
    <property type="match status" value="1"/>
</dbReference>
<dbReference type="SUPFAM" id="SSF53383">
    <property type="entry name" value="PLP-dependent transferases"/>
    <property type="match status" value="1"/>
</dbReference>
<dbReference type="PROSITE" id="PS00600">
    <property type="entry name" value="AA_TRANSFER_CLASS_3"/>
    <property type="match status" value="1"/>
</dbReference>